<reference key="1">
    <citation type="journal article" date="1992" name="Plant Mol. Biol.">
        <title>Isolation, characterization and nucleotide sequence of a full-length pea cDNA encoding thioredoxin-f.</title>
        <authorList>
            <person name="Lepiniec L."/>
            <person name="Hodges M."/>
            <person name="Gadal P."/>
            <person name="Cretin C."/>
        </authorList>
    </citation>
    <scope>NUCLEOTIDE SEQUENCE [MRNA]</scope>
    <source>
        <tissue>Leaf</tissue>
    </source>
</reference>
<reference key="2">
    <citation type="journal article" date="1996" name="J. Mol. Evol.">
        <title>Intron position as an evolutionary marker of thioredoxins and thioredoxin domains.</title>
        <authorList>
            <person name="Sahrawy M."/>
            <person name="Hecht V."/>
            <person name="Lopez Jaramillo J."/>
            <person name="Chueca A."/>
            <person name="Chartier Y."/>
            <person name="Meyer Y."/>
        </authorList>
    </citation>
    <scope>NUCLEOTIDE SEQUENCE [GENOMIC DNA]</scope>
</reference>
<dbReference type="EMBL" id="X63537">
    <property type="protein sequence ID" value="CAA45098.1"/>
    <property type="molecule type" value="mRNA"/>
</dbReference>
<dbReference type="EMBL" id="U35830">
    <property type="protein sequence ID" value="AAC49357.1"/>
    <property type="molecule type" value="Genomic_DNA"/>
</dbReference>
<dbReference type="PIR" id="S20929">
    <property type="entry name" value="S20929"/>
</dbReference>
<dbReference type="RefSeq" id="NP_001414514.1">
    <property type="nucleotide sequence ID" value="NM_001427585.1"/>
</dbReference>
<dbReference type="SMR" id="P29450"/>
<dbReference type="GeneID" id="127126961"/>
<dbReference type="OrthoDB" id="10263751at2759"/>
<dbReference type="GO" id="GO:0009507">
    <property type="term" value="C:chloroplast"/>
    <property type="evidence" value="ECO:0007669"/>
    <property type="project" value="UniProtKB-SubCell"/>
</dbReference>
<dbReference type="CDD" id="cd02947">
    <property type="entry name" value="TRX_family"/>
    <property type="match status" value="1"/>
</dbReference>
<dbReference type="Gene3D" id="3.40.30.10">
    <property type="entry name" value="Glutaredoxin"/>
    <property type="match status" value="1"/>
</dbReference>
<dbReference type="InterPro" id="IPR036249">
    <property type="entry name" value="Thioredoxin-like_sf"/>
</dbReference>
<dbReference type="InterPro" id="IPR017937">
    <property type="entry name" value="Thioredoxin_CS"/>
</dbReference>
<dbReference type="InterPro" id="IPR013766">
    <property type="entry name" value="Thioredoxin_domain"/>
</dbReference>
<dbReference type="PANTHER" id="PTHR46115">
    <property type="entry name" value="THIOREDOXIN-LIKE PROTEIN 1"/>
    <property type="match status" value="1"/>
</dbReference>
<dbReference type="Pfam" id="PF00085">
    <property type="entry name" value="Thioredoxin"/>
    <property type="match status" value="1"/>
</dbReference>
<dbReference type="PRINTS" id="PR00421">
    <property type="entry name" value="THIOREDOXIN"/>
</dbReference>
<dbReference type="SUPFAM" id="SSF52833">
    <property type="entry name" value="Thioredoxin-like"/>
    <property type="match status" value="1"/>
</dbReference>
<dbReference type="PROSITE" id="PS00194">
    <property type="entry name" value="THIOREDOXIN_1"/>
    <property type="match status" value="1"/>
</dbReference>
<dbReference type="PROSITE" id="PS51352">
    <property type="entry name" value="THIOREDOXIN_2"/>
    <property type="match status" value="1"/>
</dbReference>
<sequence>MALNLCTSPKWIGTTVFDSASSSKPSLASSFSTTSFSSSILCSKRVGLQRLSLRRSISVSVRSSLETAGPTVTVGKVTEVNKDTFWPIVNAAGDKTVVLDMFTKWCGPCKVIAPLYEELSQKYLDVVFLKLDCNQDNKSLAKELGIKVVPTFKILKDNKIVKEVTGAKFDDLVAAIDTVRSS</sequence>
<feature type="transit peptide" description="Chloroplast" evidence="2">
    <location>
        <begin position="1"/>
        <end position="69"/>
    </location>
</feature>
<feature type="chain" id="PRO_0000034160" description="Thioredoxin F-type, chloroplastic">
    <location>
        <begin position="70"/>
        <end position="182"/>
    </location>
</feature>
<feature type="domain" description="Thioredoxin" evidence="3">
    <location>
        <begin position="70"/>
        <end position="181"/>
    </location>
</feature>
<feature type="active site" description="Nucleophile" evidence="1">
    <location>
        <position position="106"/>
    </location>
</feature>
<feature type="active site" description="Nucleophile" evidence="1">
    <location>
        <position position="109"/>
    </location>
</feature>
<feature type="site" description="Deprotonates C-terminal active site Cys" evidence="1">
    <location>
        <position position="100"/>
    </location>
</feature>
<feature type="site" description="Contributes to redox potential value" evidence="1">
    <location>
        <position position="107"/>
    </location>
</feature>
<feature type="site" description="Contributes to redox potential value" evidence="1">
    <location>
        <position position="108"/>
    </location>
</feature>
<feature type="disulfide bond" description="Redox-active" evidence="3">
    <location>
        <begin position="106"/>
        <end position="109"/>
    </location>
</feature>
<evidence type="ECO:0000250" key="1"/>
<evidence type="ECO:0000255" key="2"/>
<evidence type="ECO:0000255" key="3">
    <source>
        <dbReference type="PROSITE-ProRule" id="PRU00691"/>
    </source>
</evidence>
<evidence type="ECO:0000305" key="4"/>
<protein>
    <recommendedName>
        <fullName>Thioredoxin F-type, chloroplastic</fullName>
        <shortName>Trx-F</shortName>
    </recommendedName>
</protein>
<proteinExistence type="evidence at transcript level"/>
<organism>
    <name type="scientific">Pisum sativum</name>
    <name type="common">Garden pea</name>
    <name type="synonym">Lathyrus oleraceus</name>
    <dbReference type="NCBI Taxonomy" id="3888"/>
    <lineage>
        <taxon>Eukaryota</taxon>
        <taxon>Viridiplantae</taxon>
        <taxon>Streptophyta</taxon>
        <taxon>Embryophyta</taxon>
        <taxon>Tracheophyta</taxon>
        <taxon>Spermatophyta</taxon>
        <taxon>Magnoliopsida</taxon>
        <taxon>eudicotyledons</taxon>
        <taxon>Gunneridae</taxon>
        <taxon>Pentapetalae</taxon>
        <taxon>rosids</taxon>
        <taxon>fabids</taxon>
        <taxon>Fabales</taxon>
        <taxon>Fabaceae</taxon>
        <taxon>Papilionoideae</taxon>
        <taxon>50 kb inversion clade</taxon>
        <taxon>NPAAA clade</taxon>
        <taxon>Hologalegina</taxon>
        <taxon>IRL clade</taxon>
        <taxon>Fabeae</taxon>
        <taxon>Pisum</taxon>
    </lineage>
</organism>
<name>TRXF_PEA</name>
<accession>P29450</accession>
<comment type="function">
    <text>Participates in various redox reactions through the reversible oxidation of the active center dithiol to a disulfide. The F form is known to activate a number of enzymes of the photosynthetic carbon cycle.</text>
</comment>
<comment type="subunit">
    <text evidence="1">Forms a complex with heterodimeric ferredoxin-thioredoxin reductase (FTR) and ferredoxin.</text>
</comment>
<comment type="subcellular location">
    <subcellularLocation>
        <location>Plastid</location>
        <location>Chloroplast</location>
    </subcellularLocation>
</comment>
<comment type="similarity">
    <text evidence="4">Belongs to the thioredoxin family. Plant F-type subfamily.</text>
</comment>
<keyword id="KW-0150">Chloroplast</keyword>
<keyword id="KW-1015">Disulfide bond</keyword>
<keyword id="KW-0249">Electron transport</keyword>
<keyword id="KW-0934">Plastid</keyword>
<keyword id="KW-0676">Redox-active center</keyword>
<keyword id="KW-0809">Transit peptide</keyword>
<keyword id="KW-0813">Transport</keyword>